<reference key="1">
    <citation type="submission" date="2007-06" db="EMBL/GenBank/DDBJ databases">
        <title>Complete sequence of Sinorhizobium medicae WSM419 chromosome.</title>
        <authorList>
            <consortium name="US DOE Joint Genome Institute"/>
            <person name="Copeland A."/>
            <person name="Lucas S."/>
            <person name="Lapidus A."/>
            <person name="Barry K."/>
            <person name="Glavina del Rio T."/>
            <person name="Dalin E."/>
            <person name="Tice H."/>
            <person name="Pitluck S."/>
            <person name="Chain P."/>
            <person name="Malfatti S."/>
            <person name="Shin M."/>
            <person name="Vergez L."/>
            <person name="Schmutz J."/>
            <person name="Larimer F."/>
            <person name="Land M."/>
            <person name="Hauser L."/>
            <person name="Kyrpides N."/>
            <person name="Mikhailova N."/>
            <person name="Reeve W.G."/>
            <person name="Richardson P."/>
        </authorList>
    </citation>
    <scope>NUCLEOTIDE SEQUENCE [LARGE SCALE GENOMIC DNA]</scope>
    <source>
        <strain>WSM419</strain>
    </source>
</reference>
<protein>
    <recommendedName>
        <fullName evidence="1">Glutamyl-tRNA(Gln) amidotransferase subunit A</fullName>
        <shortName evidence="1">Glu-ADT subunit A</shortName>
        <ecNumber evidence="1">6.3.5.7</ecNumber>
    </recommendedName>
</protein>
<dbReference type="EC" id="6.3.5.7" evidence="1"/>
<dbReference type="EMBL" id="CP000738">
    <property type="protein sequence ID" value="ABR59799.1"/>
    <property type="molecule type" value="Genomic_DNA"/>
</dbReference>
<dbReference type="RefSeq" id="WP_011975135.1">
    <property type="nucleotide sequence ID" value="NC_009636.1"/>
</dbReference>
<dbReference type="RefSeq" id="YP_001326634.1">
    <property type="nucleotide sequence ID" value="NC_009636.1"/>
</dbReference>
<dbReference type="SMR" id="A6U819"/>
<dbReference type="STRING" id="366394.Smed_0944"/>
<dbReference type="GeneID" id="61612221"/>
<dbReference type="KEGG" id="smd:Smed_0944"/>
<dbReference type="PATRIC" id="fig|366394.8.peg.4060"/>
<dbReference type="eggNOG" id="COG0154">
    <property type="taxonomic scope" value="Bacteria"/>
</dbReference>
<dbReference type="HOGENOM" id="CLU_009600_0_3_5"/>
<dbReference type="OrthoDB" id="9811471at2"/>
<dbReference type="Proteomes" id="UP000001108">
    <property type="component" value="Chromosome"/>
</dbReference>
<dbReference type="GO" id="GO:0030956">
    <property type="term" value="C:glutamyl-tRNA(Gln) amidotransferase complex"/>
    <property type="evidence" value="ECO:0007669"/>
    <property type="project" value="InterPro"/>
</dbReference>
<dbReference type="GO" id="GO:0005524">
    <property type="term" value="F:ATP binding"/>
    <property type="evidence" value="ECO:0007669"/>
    <property type="project" value="UniProtKB-KW"/>
</dbReference>
<dbReference type="GO" id="GO:0050567">
    <property type="term" value="F:glutaminyl-tRNA synthase (glutamine-hydrolyzing) activity"/>
    <property type="evidence" value="ECO:0007669"/>
    <property type="project" value="UniProtKB-UniRule"/>
</dbReference>
<dbReference type="GO" id="GO:0006412">
    <property type="term" value="P:translation"/>
    <property type="evidence" value="ECO:0007669"/>
    <property type="project" value="UniProtKB-UniRule"/>
</dbReference>
<dbReference type="Gene3D" id="3.90.1300.10">
    <property type="entry name" value="Amidase signature (AS) domain"/>
    <property type="match status" value="1"/>
</dbReference>
<dbReference type="HAMAP" id="MF_00120">
    <property type="entry name" value="GatA"/>
    <property type="match status" value="1"/>
</dbReference>
<dbReference type="InterPro" id="IPR000120">
    <property type="entry name" value="Amidase"/>
</dbReference>
<dbReference type="InterPro" id="IPR020556">
    <property type="entry name" value="Amidase_CS"/>
</dbReference>
<dbReference type="InterPro" id="IPR023631">
    <property type="entry name" value="Amidase_dom"/>
</dbReference>
<dbReference type="InterPro" id="IPR036928">
    <property type="entry name" value="AS_sf"/>
</dbReference>
<dbReference type="InterPro" id="IPR004412">
    <property type="entry name" value="GatA"/>
</dbReference>
<dbReference type="NCBIfam" id="TIGR00132">
    <property type="entry name" value="gatA"/>
    <property type="match status" value="1"/>
</dbReference>
<dbReference type="PANTHER" id="PTHR11895:SF151">
    <property type="entry name" value="GLUTAMYL-TRNA(GLN) AMIDOTRANSFERASE SUBUNIT A"/>
    <property type="match status" value="1"/>
</dbReference>
<dbReference type="PANTHER" id="PTHR11895">
    <property type="entry name" value="TRANSAMIDASE"/>
    <property type="match status" value="1"/>
</dbReference>
<dbReference type="Pfam" id="PF01425">
    <property type="entry name" value="Amidase"/>
    <property type="match status" value="1"/>
</dbReference>
<dbReference type="SUPFAM" id="SSF75304">
    <property type="entry name" value="Amidase signature (AS) enzymes"/>
    <property type="match status" value="1"/>
</dbReference>
<dbReference type="PROSITE" id="PS00571">
    <property type="entry name" value="AMIDASES"/>
    <property type="match status" value="1"/>
</dbReference>
<organism>
    <name type="scientific">Sinorhizobium medicae (strain WSM419)</name>
    <name type="common">Ensifer medicae</name>
    <dbReference type="NCBI Taxonomy" id="366394"/>
    <lineage>
        <taxon>Bacteria</taxon>
        <taxon>Pseudomonadati</taxon>
        <taxon>Pseudomonadota</taxon>
        <taxon>Alphaproteobacteria</taxon>
        <taxon>Hyphomicrobiales</taxon>
        <taxon>Rhizobiaceae</taxon>
        <taxon>Sinorhizobium/Ensifer group</taxon>
        <taxon>Sinorhizobium</taxon>
    </lineage>
</organism>
<feature type="chain" id="PRO_1000015905" description="Glutamyl-tRNA(Gln) amidotransferase subunit A">
    <location>
        <begin position="1"/>
        <end position="493"/>
    </location>
</feature>
<feature type="active site" description="Charge relay system" evidence="1">
    <location>
        <position position="79"/>
    </location>
</feature>
<feature type="active site" description="Charge relay system" evidence="1">
    <location>
        <position position="159"/>
    </location>
</feature>
<feature type="active site" description="Acyl-ester intermediate" evidence="1">
    <location>
        <position position="183"/>
    </location>
</feature>
<accession>A6U819</accession>
<sequence>MTDLTSLTIAEARAKLSDKEITAVELTDAYLAAIEAANETINAYIAVTPDKAREMAKASDARIGAGKAGALEGIPLGIKDLFGTQGLHTQACSHILDGFRPHYESTVTQNLWNDGAVMLGKLNMDEFAMGSSNETSYYGPVKNPWRAKESNLDLVPGGSSGGSAAAVAARLCAGATATDTGGSIRQPAAFTGTVGIKPTYGRCSRWGVIAFASSLDQAGPIARDVRDAAILLKSMASVDPKDTTSVDLPVPDYEAAIGQSIKGMRIGIPKEYRVEGMPEEIEALWQQGVAWLKDAGAEIVDISLPHTKYALPAYYIVAPAEASSNLARYDGVRYGLRVDGKDIVDMYEKTRAAGFGQEVKRRIMIGTYVLSAGYYDAYYLRAQKVRTLIKRDFELAFHAGVDAILTPATPSSAFGIADEDLASDPVKMYLNDIFTVTVNMAGLPGIAVPGGLDHKGLPLGLQLIGKPFDEETLFKTAHVIEQAAGRFTPSKWW</sequence>
<comment type="function">
    <text evidence="1">Allows the formation of correctly charged Gln-tRNA(Gln) through the transamidation of misacylated Glu-tRNA(Gln) in organisms which lack glutaminyl-tRNA synthetase. The reaction takes place in the presence of glutamine and ATP through an activated gamma-phospho-Glu-tRNA(Gln).</text>
</comment>
<comment type="catalytic activity">
    <reaction evidence="1">
        <text>L-glutamyl-tRNA(Gln) + L-glutamine + ATP + H2O = L-glutaminyl-tRNA(Gln) + L-glutamate + ADP + phosphate + H(+)</text>
        <dbReference type="Rhea" id="RHEA:17521"/>
        <dbReference type="Rhea" id="RHEA-COMP:9681"/>
        <dbReference type="Rhea" id="RHEA-COMP:9684"/>
        <dbReference type="ChEBI" id="CHEBI:15377"/>
        <dbReference type="ChEBI" id="CHEBI:15378"/>
        <dbReference type="ChEBI" id="CHEBI:29985"/>
        <dbReference type="ChEBI" id="CHEBI:30616"/>
        <dbReference type="ChEBI" id="CHEBI:43474"/>
        <dbReference type="ChEBI" id="CHEBI:58359"/>
        <dbReference type="ChEBI" id="CHEBI:78520"/>
        <dbReference type="ChEBI" id="CHEBI:78521"/>
        <dbReference type="ChEBI" id="CHEBI:456216"/>
        <dbReference type="EC" id="6.3.5.7"/>
    </reaction>
</comment>
<comment type="subunit">
    <text evidence="1">Heterotrimer of A, B and C subunits.</text>
</comment>
<comment type="similarity">
    <text evidence="1">Belongs to the amidase family. GatA subfamily.</text>
</comment>
<evidence type="ECO:0000255" key="1">
    <source>
        <dbReference type="HAMAP-Rule" id="MF_00120"/>
    </source>
</evidence>
<proteinExistence type="inferred from homology"/>
<keyword id="KW-0067">ATP-binding</keyword>
<keyword id="KW-0436">Ligase</keyword>
<keyword id="KW-0547">Nucleotide-binding</keyword>
<keyword id="KW-0648">Protein biosynthesis</keyword>
<name>GATA_SINMW</name>
<gene>
    <name evidence="1" type="primary">gatA</name>
    <name type="ordered locus">Smed_0944</name>
</gene>